<reference key="1">
    <citation type="journal article" date="1985" name="Eur. J. Biochem.">
        <title>Nucleotide sequence analysis of the nuclear gene coding for manganese superoxide dismutase of yeast mitochondria, a gene previously assumed to code for the Rieske iron-sulphur protein.</title>
        <authorList>
            <person name="Marres C.A.M."/>
            <person name="van Loon A.P.G.M."/>
            <person name="Oudshoorn P."/>
            <person name="van Steeg H."/>
            <person name="Grivell L.A."/>
            <person name="Slater E.C."/>
        </authorList>
    </citation>
    <scope>NUCLEOTIDE SEQUENCE [GENOMIC DNA]</scope>
    <source>
        <strain>ATCC 28383 / FL100 / VTT C-80102</strain>
    </source>
</reference>
<reference key="2">
    <citation type="journal article" date="1994" name="Science">
        <title>Complete nucleotide sequence of Saccharomyces cerevisiae chromosome VIII.</title>
        <authorList>
            <person name="Johnston M."/>
            <person name="Andrews S."/>
            <person name="Brinkman R."/>
            <person name="Cooper J."/>
            <person name="Ding H."/>
            <person name="Dover J."/>
            <person name="Du Z."/>
            <person name="Favello A."/>
            <person name="Fulton L."/>
            <person name="Gattung S."/>
            <person name="Geisel C."/>
            <person name="Kirsten J."/>
            <person name="Kucaba T."/>
            <person name="Hillier L.W."/>
            <person name="Jier M."/>
            <person name="Johnston L."/>
            <person name="Langston Y."/>
            <person name="Latreille P."/>
            <person name="Louis E.J."/>
            <person name="Macri C."/>
            <person name="Mardis E."/>
            <person name="Menezes S."/>
            <person name="Mouser L."/>
            <person name="Nhan M."/>
            <person name="Rifkin L."/>
            <person name="Riles L."/>
            <person name="St Peter H."/>
            <person name="Trevaskis E."/>
            <person name="Vaughan K."/>
            <person name="Vignati D."/>
            <person name="Wilcox L."/>
            <person name="Wohldman P."/>
            <person name="Waterston R."/>
            <person name="Wilson R."/>
            <person name="Vaudin M."/>
        </authorList>
    </citation>
    <scope>NUCLEOTIDE SEQUENCE [LARGE SCALE GENOMIC DNA]</scope>
    <source>
        <strain>ATCC 204508 / S288c</strain>
    </source>
</reference>
<reference key="3">
    <citation type="journal article" date="2014" name="G3 (Bethesda)">
        <title>The reference genome sequence of Saccharomyces cerevisiae: Then and now.</title>
        <authorList>
            <person name="Engel S.R."/>
            <person name="Dietrich F.S."/>
            <person name="Fisk D.G."/>
            <person name="Binkley G."/>
            <person name="Balakrishnan R."/>
            <person name="Costanzo M.C."/>
            <person name="Dwight S.S."/>
            <person name="Hitz B.C."/>
            <person name="Karra K."/>
            <person name="Nash R.S."/>
            <person name="Weng S."/>
            <person name="Wong E.D."/>
            <person name="Lloyd P."/>
            <person name="Skrzypek M.S."/>
            <person name="Miyasato S.R."/>
            <person name="Simison M."/>
            <person name="Cherry J.M."/>
        </authorList>
    </citation>
    <scope>GENOME REANNOTATION</scope>
    <source>
        <strain>ATCC 204508 / S288c</strain>
    </source>
</reference>
<reference key="4">
    <citation type="journal article" date="2002" name="Genome Res.">
        <title>Parallel identification of new genes in Saccharomyces cerevisiae.</title>
        <authorList>
            <person name="Oshiro G."/>
            <person name="Wodicka L.M."/>
            <person name="Washburn M.P."/>
            <person name="Yates J.R. III"/>
            <person name="Lockhart D.J."/>
            <person name="Winzeler E.A."/>
        </authorList>
    </citation>
    <scope>IDENTIFICATION BY MASS SPECTROMETRY</scope>
</reference>
<organism>
    <name type="scientific">Saccharomyces cerevisiae (strain ATCC 204508 / S288c)</name>
    <name type="common">Baker's yeast</name>
    <dbReference type="NCBI Taxonomy" id="559292"/>
    <lineage>
        <taxon>Eukaryota</taxon>
        <taxon>Fungi</taxon>
        <taxon>Dikarya</taxon>
        <taxon>Ascomycota</taxon>
        <taxon>Saccharomycotina</taxon>
        <taxon>Saccharomycetes</taxon>
        <taxon>Saccharomycetales</taxon>
        <taxon>Saccharomycetaceae</taxon>
        <taxon>Saccharomyces</taxon>
    </lineage>
</organism>
<comment type="subcellular location">
    <subcellularLocation>
        <location evidence="3">Membrane</location>
        <topology evidence="3">Single-pass membrane protein</topology>
    </subcellularLocation>
</comment>
<accession>Q07074</accession>
<accession>D3DKV2</accession>
<dbReference type="EMBL" id="X02156">
    <property type="protein sequence ID" value="CAA26093.1"/>
    <property type="molecule type" value="Genomic_DNA"/>
</dbReference>
<dbReference type="EMBL" id="U10555">
    <property type="status" value="NOT_ANNOTATED_CDS"/>
    <property type="molecule type" value="Genomic_DNA"/>
</dbReference>
<dbReference type="EMBL" id="BK006934">
    <property type="protein sequence ID" value="DAA06696.1"/>
    <property type="molecule type" value="Genomic_DNA"/>
</dbReference>
<dbReference type="RefSeq" id="NP_878086.1">
    <property type="nucleotide sequence ID" value="NM_001184651.1"/>
</dbReference>
<dbReference type="SMR" id="Q07074"/>
<dbReference type="BioGRID" id="37068">
    <property type="interactions" value="2"/>
</dbReference>
<dbReference type="FunCoup" id="Q07074">
    <property type="interactions" value="18"/>
</dbReference>
<dbReference type="PaxDb" id="4932-YHR007C-A"/>
<dbReference type="EnsemblFungi" id="YHR007C-A_mRNA">
    <property type="protein sequence ID" value="YHR007C-A"/>
    <property type="gene ID" value="YHR007C-A"/>
</dbReference>
<dbReference type="GeneID" id="1466526"/>
<dbReference type="KEGG" id="sce:YHR007C-A"/>
<dbReference type="AGR" id="SGD:S000028830"/>
<dbReference type="SGD" id="S000028830">
    <property type="gene designation" value="YHR007C-A"/>
</dbReference>
<dbReference type="VEuPathDB" id="FungiDB:YHR007C-A"/>
<dbReference type="HOGENOM" id="CLU_2741466_0_0_1"/>
<dbReference type="InParanoid" id="Q07074"/>
<dbReference type="BioCyc" id="YEAST:G3O-31277-MONOMER"/>
<dbReference type="BioGRID-ORCS" id="1466526">
    <property type="hits" value="0 hits in 10 CRISPR screens"/>
</dbReference>
<dbReference type="PRO" id="PR:Q07074"/>
<dbReference type="Proteomes" id="UP000002311">
    <property type="component" value="Chromosome VIII"/>
</dbReference>
<dbReference type="RNAct" id="Q07074">
    <property type="molecule type" value="protein"/>
</dbReference>
<dbReference type="GO" id="GO:0016020">
    <property type="term" value="C:membrane"/>
    <property type="evidence" value="ECO:0007669"/>
    <property type="project" value="UniProtKB-SubCell"/>
</dbReference>
<protein>
    <recommendedName>
        <fullName>Uncharacterized protein YHR007C-A</fullName>
    </recommendedName>
</protein>
<feature type="chain" id="PRO_0000245393" description="Uncharacterized protein YHR007C-A">
    <location>
        <begin position="1"/>
        <end position="71"/>
    </location>
</feature>
<feature type="transmembrane region" description="Helical" evidence="1">
    <location>
        <begin position="21"/>
        <end position="43"/>
    </location>
</feature>
<feature type="region of interest" description="Disordered" evidence="2">
    <location>
        <begin position="1"/>
        <end position="20"/>
    </location>
</feature>
<feature type="compositionally biased region" description="Basic residues" evidence="2">
    <location>
        <begin position="1"/>
        <end position="10"/>
    </location>
</feature>
<feature type="sequence conflict" description="In Ref. 1; CAA26093." evidence="3" ref="1">
    <original>LFL</original>
    <variation>FFF</variation>
    <location>
        <begin position="24"/>
        <end position="26"/>
    </location>
</feature>
<gene>
    <name type="ordered locus">YHR007C-A</name>
</gene>
<sequence>MHRKKRKKEKKRTEKDNTTNLPPLFLFPCSLSLPTLLAPVHYIPTRLTHHQAENQLFLLLFQPIIVKPLRS</sequence>
<name>YH007_YEAST</name>
<proteinExistence type="evidence at protein level"/>
<evidence type="ECO:0000255" key="1"/>
<evidence type="ECO:0000256" key="2">
    <source>
        <dbReference type="SAM" id="MobiDB-lite"/>
    </source>
</evidence>
<evidence type="ECO:0000305" key="3"/>
<keyword id="KW-0472">Membrane</keyword>
<keyword id="KW-1185">Reference proteome</keyword>
<keyword id="KW-0812">Transmembrane</keyword>
<keyword id="KW-1133">Transmembrane helix</keyword>